<keyword id="KW-0150">Chloroplast</keyword>
<keyword id="KW-0934">Plastid</keyword>
<keyword id="KW-0687">Ribonucleoprotein</keyword>
<keyword id="KW-0689">Ribosomal protein</keyword>
<keyword id="KW-0694">RNA-binding</keyword>
<keyword id="KW-0699">rRNA-binding</keyword>
<comment type="subunit">
    <text evidence="1">Part of the 30S ribosomal subunit.</text>
</comment>
<comment type="subcellular location">
    <subcellularLocation>
        <location>Plastid</location>
        <location>Chloroplast</location>
    </subcellularLocation>
</comment>
<comment type="similarity">
    <text evidence="1">Belongs to the universal ribosomal protein uS11 family.</text>
</comment>
<feature type="chain" id="PRO_0000123326" description="Small ribosomal subunit protein uS11c">
    <location>
        <begin position="1"/>
        <end position="143"/>
    </location>
</feature>
<dbReference type="EMBL" id="AP006714">
    <property type="protein sequence ID" value="BAD27325.1"/>
    <property type="molecule type" value="Genomic_DNA"/>
</dbReference>
<dbReference type="RefSeq" id="YP_009389603.1">
    <property type="nucleotide sequence ID" value="NC_035224.1"/>
</dbReference>
<dbReference type="SMR" id="Q6ENT1"/>
<dbReference type="GeneID" id="33347838"/>
<dbReference type="GO" id="GO:0009507">
    <property type="term" value="C:chloroplast"/>
    <property type="evidence" value="ECO:0007669"/>
    <property type="project" value="UniProtKB-SubCell"/>
</dbReference>
<dbReference type="GO" id="GO:1990904">
    <property type="term" value="C:ribonucleoprotein complex"/>
    <property type="evidence" value="ECO:0007669"/>
    <property type="project" value="UniProtKB-KW"/>
</dbReference>
<dbReference type="GO" id="GO:0005840">
    <property type="term" value="C:ribosome"/>
    <property type="evidence" value="ECO:0007669"/>
    <property type="project" value="UniProtKB-KW"/>
</dbReference>
<dbReference type="GO" id="GO:0019843">
    <property type="term" value="F:rRNA binding"/>
    <property type="evidence" value="ECO:0007669"/>
    <property type="project" value="UniProtKB-UniRule"/>
</dbReference>
<dbReference type="GO" id="GO:0003735">
    <property type="term" value="F:structural constituent of ribosome"/>
    <property type="evidence" value="ECO:0007669"/>
    <property type="project" value="InterPro"/>
</dbReference>
<dbReference type="GO" id="GO:0006412">
    <property type="term" value="P:translation"/>
    <property type="evidence" value="ECO:0007669"/>
    <property type="project" value="UniProtKB-UniRule"/>
</dbReference>
<dbReference type="FunFam" id="3.30.420.80:FF:000003">
    <property type="entry name" value="30S ribosomal protein S11, chloroplastic"/>
    <property type="match status" value="1"/>
</dbReference>
<dbReference type="Gene3D" id="3.30.420.80">
    <property type="entry name" value="Ribosomal protein S11"/>
    <property type="match status" value="1"/>
</dbReference>
<dbReference type="HAMAP" id="MF_01310">
    <property type="entry name" value="Ribosomal_uS11"/>
    <property type="match status" value="1"/>
</dbReference>
<dbReference type="InterPro" id="IPR001971">
    <property type="entry name" value="Ribosomal_uS11"/>
</dbReference>
<dbReference type="InterPro" id="IPR018102">
    <property type="entry name" value="Ribosomal_uS11_CS"/>
</dbReference>
<dbReference type="InterPro" id="IPR036967">
    <property type="entry name" value="Ribosomal_uS11_sf"/>
</dbReference>
<dbReference type="NCBIfam" id="NF003698">
    <property type="entry name" value="PRK05309.1"/>
    <property type="match status" value="1"/>
</dbReference>
<dbReference type="PANTHER" id="PTHR11759">
    <property type="entry name" value="40S RIBOSOMAL PROTEIN S14/30S RIBOSOMAL PROTEIN S11"/>
    <property type="match status" value="1"/>
</dbReference>
<dbReference type="Pfam" id="PF00411">
    <property type="entry name" value="Ribosomal_S11"/>
    <property type="match status" value="1"/>
</dbReference>
<dbReference type="PIRSF" id="PIRSF002131">
    <property type="entry name" value="Ribosomal_S11"/>
    <property type="match status" value="1"/>
</dbReference>
<dbReference type="SUPFAM" id="SSF53137">
    <property type="entry name" value="Translational machinery components"/>
    <property type="match status" value="1"/>
</dbReference>
<dbReference type="PROSITE" id="PS00054">
    <property type="entry name" value="RIBOSOMAL_S11"/>
    <property type="match status" value="1"/>
</dbReference>
<sequence>MTKAIPKIGSRKKVRIGLRRNARFSLRKSARRITKGVIHVQASFNNTIITVTDPQGRVVFWSSAGTCGFKSSRKASPYAGQRTAVDAIRTVGLQRAEVMVKGAGSGRDAALRAIAKSGVRLSCIRDVTPMPHNGCRPPKKRRL</sequence>
<reference key="1">
    <citation type="journal article" date="2004" name="DNA Res.">
        <title>Complete nucleotide sequence of the sugarcane (Saccharum officinarum) chloroplast genome: a comparative analysis of four monocot chloroplast genomes.</title>
        <authorList>
            <person name="Asano T."/>
            <person name="Tsudzuki T."/>
            <person name="Takahashi S."/>
            <person name="Shimada H."/>
            <person name="Kadowaki K."/>
        </authorList>
    </citation>
    <scope>NUCLEOTIDE SEQUENCE [LARGE SCALE GENOMIC DNA]</scope>
</reference>
<name>RR11_SACOF</name>
<gene>
    <name evidence="1" type="primary">rps11</name>
</gene>
<evidence type="ECO:0000255" key="1">
    <source>
        <dbReference type="HAMAP-Rule" id="MF_01310"/>
    </source>
</evidence>
<evidence type="ECO:0000305" key="2"/>
<accession>Q6ENT1</accession>
<organism>
    <name type="scientific">Saccharum officinarum</name>
    <name type="common">Sugarcane</name>
    <dbReference type="NCBI Taxonomy" id="4547"/>
    <lineage>
        <taxon>Eukaryota</taxon>
        <taxon>Viridiplantae</taxon>
        <taxon>Streptophyta</taxon>
        <taxon>Embryophyta</taxon>
        <taxon>Tracheophyta</taxon>
        <taxon>Spermatophyta</taxon>
        <taxon>Magnoliopsida</taxon>
        <taxon>Liliopsida</taxon>
        <taxon>Poales</taxon>
        <taxon>Poaceae</taxon>
        <taxon>PACMAD clade</taxon>
        <taxon>Panicoideae</taxon>
        <taxon>Andropogonodae</taxon>
        <taxon>Andropogoneae</taxon>
        <taxon>Saccharinae</taxon>
        <taxon>Saccharum</taxon>
        <taxon>Saccharum officinarum species complex</taxon>
    </lineage>
</organism>
<protein>
    <recommendedName>
        <fullName evidence="1">Small ribosomal subunit protein uS11c</fullName>
    </recommendedName>
    <alternativeName>
        <fullName evidence="2">30S ribosomal protein S11, chloroplastic</fullName>
    </alternativeName>
</protein>
<proteinExistence type="inferred from homology"/>
<geneLocation type="chloroplast"/>